<evidence type="ECO:0000250" key="1"/>
<evidence type="ECO:0000250" key="2">
    <source>
        <dbReference type="UniProtKB" id="Q63564"/>
    </source>
</evidence>
<evidence type="ECO:0000255" key="3"/>
<evidence type="ECO:0000256" key="4">
    <source>
        <dbReference type="SAM" id="MobiDB-lite"/>
    </source>
</evidence>
<evidence type="ECO:0000269" key="5">
    <source>
    </source>
</evidence>
<evidence type="ECO:0000269" key="6">
    <source>
    </source>
</evidence>
<evidence type="ECO:0000269" key="7">
    <source>
    </source>
</evidence>
<evidence type="ECO:0000269" key="8">
    <source>
    </source>
</evidence>
<evidence type="ECO:0000269" key="9">
    <source>
    </source>
</evidence>
<evidence type="ECO:0000269" key="10">
    <source>
    </source>
</evidence>
<evidence type="ECO:0000269" key="11">
    <source>
    </source>
</evidence>
<evidence type="ECO:0000269" key="12">
    <source>
    </source>
</evidence>
<evidence type="ECO:0000305" key="13"/>
<evidence type="ECO:0000305" key="14">
    <source>
    </source>
</evidence>
<evidence type="ECO:0000305" key="15">
    <source>
    </source>
</evidence>
<evidence type="ECO:0000305" key="16">
    <source>
    </source>
</evidence>
<evidence type="ECO:0007744" key="17">
    <source>
    </source>
</evidence>
<evidence type="ECO:0007744" key="18">
    <source>
    </source>
</evidence>
<dbReference type="EMBL" id="AK029736">
    <property type="protein sequence ID" value="BAC26590.1"/>
    <property type="molecule type" value="mRNA"/>
</dbReference>
<dbReference type="EMBL" id="AK043830">
    <property type="protein sequence ID" value="BAC31669.1"/>
    <property type="molecule type" value="mRNA"/>
</dbReference>
<dbReference type="EMBL" id="AK139478">
    <property type="protein sequence ID" value="BAE24029.1"/>
    <property type="molecule type" value="mRNA"/>
</dbReference>
<dbReference type="EMBL" id="AK140104">
    <property type="protein sequence ID" value="BAE24238.1"/>
    <property type="molecule type" value="mRNA"/>
</dbReference>
<dbReference type="EMBL" id="AK147261">
    <property type="protein sequence ID" value="BAE27804.1"/>
    <property type="molecule type" value="mRNA"/>
</dbReference>
<dbReference type="EMBL" id="BC060224">
    <property type="protein sequence ID" value="AAH60224.1"/>
    <property type="molecule type" value="mRNA"/>
</dbReference>
<dbReference type="EMBL" id="AF196782">
    <property type="protein sequence ID" value="AAG28491.1"/>
    <property type="molecule type" value="Genomic_DNA"/>
</dbReference>
<dbReference type="EMBL" id="AK122359">
    <property type="protein sequence ID" value="BAC65641.1"/>
    <property type="molecule type" value="mRNA"/>
</dbReference>
<dbReference type="CCDS" id="CCDS21368.1"/>
<dbReference type="RefSeq" id="NP_001103223.1">
    <property type="nucleotide sequence ID" value="NM_001109753.1"/>
</dbReference>
<dbReference type="RefSeq" id="NP_001347500.1">
    <property type="nucleotide sequence ID" value="NM_001360571.1"/>
</dbReference>
<dbReference type="RefSeq" id="NP_001347501.1">
    <property type="nucleotide sequence ID" value="NM_001360572.1"/>
</dbReference>
<dbReference type="RefSeq" id="NP_001347502.1">
    <property type="nucleotide sequence ID" value="NM_001360573.1"/>
</dbReference>
<dbReference type="RefSeq" id="NP_001347503.1">
    <property type="nucleotide sequence ID" value="NM_001360574.1"/>
</dbReference>
<dbReference type="RefSeq" id="NP_001347504.1">
    <property type="nucleotide sequence ID" value="NM_001360575.1"/>
</dbReference>
<dbReference type="RefSeq" id="NP_705807.2">
    <property type="nucleotide sequence ID" value="NM_153579.4"/>
</dbReference>
<dbReference type="RefSeq" id="XP_006541122.1">
    <property type="nucleotide sequence ID" value="XM_006541059.4"/>
</dbReference>
<dbReference type="RefSeq" id="XP_006541123.1">
    <property type="nucleotide sequence ID" value="XM_006541060.3"/>
</dbReference>
<dbReference type="RefSeq" id="XP_006541124.1">
    <property type="nucleotide sequence ID" value="XM_006541061.2"/>
</dbReference>
<dbReference type="RefSeq" id="XP_017167699.1">
    <property type="nucleotide sequence ID" value="XM_017312210.1"/>
</dbReference>
<dbReference type="RefSeq" id="XP_017167701.1">
    <property type="nucleotide sequence ID" value="XM_017312212.1"/>
</dbReference>
<dbReference type="RefSeq" id="XP_036009216.1">
    <property type="nucleotide sequence ID" value="XM_036153323.1"/>
</dbReference>
<dbReference type="RefSeq" id="XP_036009217.1">
    <property type="nucleotide sequence ID" value="XM_036153324.1"/>
</dbReference>
<dbReference type="SMR" id="Q8BG39"/>
<dbReference type="BioGRID" id="211036">
    <property type="interactions" value="6"/>
</dbReference>
<dbReference type="FunCoup" id="Q8BG39">
    <property type="interactions" value="478"/>
</dbReference>
<dbReference type="IntAct" id="Q8BG39">
    <property type="interactions" value="1"/>
</dbReference>
<dbReference type="MINT" id="Q8BG39"/>
<dbReference type="STRING" id="10090.ENSMUSP00000127245"/>
<dbReference type="GlyCosmos" id="Q8BG39">
    <property type="glycosylation" value="3 sites, No reported glycans"/>
</dbReference>
<dbReference type="GlyGen" id="Q8BG39">
    <property type="glycosylation" value="4 sites, 3 N-linked glycans (3 sites), 1 O-linked glycan (1 site)"/>
</dbReference>
<dbReference type="iPTMnet" id="Q8BG39"/>
<dbReference type="PhosphoSitePlus" id="Q8BG39"/>
<dbReference type="SwissPalm" id="Q8BG39"/>
<dbReference type="jPOST" id="Q8BG39"/>
<dbReference type="PaxDb" id="10090-ENSMUSP00000127245"/>
<dbReference type="PeptideAtlas" id="Q8BG39"/>
<dbReference type="ProteomicsDB" id="258676"/>
<dbReference type="Antibodypedia" id="29003">
    <property type="antibodies" value="144 antibodies from 25 providers"/>
</dbReference>
<dbReference type="DNASU" id="64176"/>
<dbReference type="Ensembl" id="ENSMUST00000085164.7">
    <property type="protein sequence ID" value="ENSMUSP00000082254.6"/>
    <property type="gene ID" value="ENSMUSG00000053025.14"/>
</dbReference>
<dbReference type="Ensembl" id="ENSMUST00000165175.8">
    <property type="protein sequence ID" value="ENSMUSP00000127245.2"/>
    <property type="gene ID" value="ENSMUSG00000053025.14"/>
</dbReference>
<dbReference type="Ensembl" id="ENSMUST00000206344.2">
    <property type="protein sequence ID" value="ENSMUSP00000146049.2"/>
    <property type="gene ID" value="ENSMUSG00000053025.14"/>
</dbReference>
<dbReference type="GeneID" id="64176"/>
<dbReference type="KEGG" id="mmu:64176"/>
<dbReference type="UCSC" id="uc009hwk.2">
    <property type="organism name" value="mouse"/>
</dbReference>
<dbReference type="AGR" id="MGI:1927338"/>
<dbReference type="CTD" id="9899"/>
<dbReference type="MGI" id="MGI:1927338">
    <property type="gene designation" value="Sv2b"/>
</dbReference>
<dbReference type="VEuPathDB" id="HostDB:ENSMUSG00000053025"/>
<dbReference type="eggNOG" id="KOG0255">
    <property type="taxonomic scope" value="Eukaryota"/>
</dbReference>
<dbReference type="GeneTree" id="ENSGT00950000182940"/>
<dbReference type="HOGENOM" id="CLU_001265_46_15_1"/>
<dbReference type="InParanoid" id="Q8BG39"/>
<dbReference type="OMA" id="LKQVWDN"/>
<dbReference type="OrthoDB" id="433512at2759"/>
<dbReference type="PhylomeDB" id="Q8BG39"/>
<dbReference type="TreeFam" id="TF324824"/>
<dbReference type="BioGRID-ORCS" id="64176">
    <property type="hits" value="2 hits in 77 CRISPR screens"/>
</dbReference>
<dbReference type="ChiTaRS" id="Sv2b">
    <property type="organism name" value="mouse"/>
</dbReference>
<dbReference type="PRO" id="PR:Q8BG39"/>
<dbReference type="Proteomes" id="UP000000589">
    <property type="component" value="Chromosome 7"/>
</dbReference>
<dbReference type="RNAct" id="Q8BG39">
    <property type="molecule type" value="protein"/>
</dbReference>
<dbReference type="Bgee" id="ENSMUSG00000053025">
    <property type="expression patterns" value="Expressed in subiculum and 173 other cell types or tissues"/>
</dbReference>
<dbReference type="ExpressionAtlas" id="Q8BG39">
    <property type="expression patterns" value="baseline and differential"/>
</dbReference>
<dbReference type="GO" id="GO:0001669">
    <property type="term" value="C:acrosomal vesicle"/>
    <property type="evidence" value="ECO:0007669"/>
    <property type="project" value="UniProtKB-SubCell"/>
</dbReference>
<dbReference type="GO" id="GO:0008021">
    <property type="term" value="C:synaptic vesicle"/>
    <property type="evidence" value="ECO:0000314"/>
    <property type="project" value="MGI"/>
</dbReference>
<dbReference type="GO" id="GO:0030672">
    <property type="term" value="C:synaptic vesicle membrane"/>
    <property type="evidence" value="ECO:0007669"/>
    <property type="project" value="UniProtKB-SubCell"/>
</dbReference>
<dbReference type="GO" id="GO:0022857">
    <property type="term" value="F:transmembrane transporter activity"/>
    <property type="evidence" value="ECO:0007669"/>
    <property type="project" value="InterPro"/>
</dbReference>
<dbReference type="GO" id="GO:0007268">
    <property type="term" value="P:chemical synaptic transmission"/>
    <property type="evidence" value="ECO:0000304"/>
    <property type="project" value="MGI"/>
</dbReference>
<dbReference type="GO" id="GO:0006836">
    <property type="term" value="P:neurotransmitter transport"/>
    <property type="evidence" value="ECO:0007669"/>
    <property type="project" value="UniProtKB-KW"/>
</dbReference>
<dbReference type="GO" id="GO:0099509">
    <property type="term" value="P:regulation of presynaptic cytosolic calcium ion concentration"/>
    <property type="evidence" value="ECO:0000314"/>
    <property type="project" value="SynGO"/>
</dbReference>
<dbReference type="GO" id="GO:2000300">
    <property type="term" value="P:regulation of synaptic vesicle exocytosis"/>
    <property type="evidence" value="ECO:0000314"/>
    <property type="project" value="SynGO"/>
</dbReference>
<dbReference type="CDD" id="cd17438">
    <property type="entry name" value="MFS_SV2B"/>
    <property type="match status" value="1"/>
</dbReference>
<dbReference type="FunFam" id="1.20.1250.20:FF:000009">
    <property type="entry name" value="Synaptic vesicle glycoprotein 2A"/>
    <property type="match status" value="1"/>
</dbReference>
<dbReference type="FunFam" id="2.160.20.80:FF:000001">
    <property type="entry name" value="Synaptic vesicle glycoprotein 2A"/>
    <property type="match status" value="1"/>
</dbReference>
<dbReference type="FunFam" id="1.20.1250.20:FF:000014">
    <property type="entry name" value="synaptic vesicle glycoprotein 2A"/>
    <property type="match status" value="1"/>
</dbReference>
<dbReference type="Gene3D" id="2.160.20.80">
    <property type="entry name" value="E3 ubiquitin-protein ligase SopA"/>
    <property type="match status" value="1"/>
</dbReference>
<dbReference type="Gene3D" id="1.20.1250.20">
    <property type="entry name" value="MFS general substrate transporter like domains"/>
    <property type="match status" value="2"/>
</dbReference>
<dbReference type="InterPro" id="IPR055415">
    <property type="entry name" value="LD_SV2"/>
</dbReference>
<dbReference type="InterPro" id="IPR011701">
    <property type="entry name" value="MFS"/>
</dbReference>
<dbReference type="InterPro" id="IPR020846">
    <property type="entry name" value="MFS_dom"/>
</dbReference>
<dbReference type="InterPro" id="IPR005828">
    <property type="entry name" value="MFS_sugar_transport-like"/>
</dbReference>
<dbReference type="InterPro" id="IPR036259">
    <property type="entry name" value="MFS_trans_sf"/>
</dbReference>
<dbReference type="InterPro" id="IPR005829">
    <property type="entry name" value="Sugar_transporter_CS"/>
</dbReference>
<dbReference type="InterPro" id="IPR022308">
    <property type="entry name" value="SV2"/>
</dbReference>
<dbReference type="NCBIfam" id="TIGR01299">
    <property type="entry name" value="synapt_SV2"/>
    <property type="match status" value="1"/>
</dbReference>
<dbReference type="PANTHER" id="PTHR23511">
    <property type="entry name" value="SYNAPTIC VESICLE GLYCOPROTEIN 2"/>
    <property type="match status" value="1"/>
</dbReference>
<dbReference type="PANTHER" id="PTHR23511:SF2">
    <property type="entry name" value="SYNAPTIC VESICLE GLYCOPROTEIN 2B"/>
    <property type="match status" value="1"/>
</dbReference>
<dbReference type="Pfam" id="PF23894">
    <property type="entry name" value="LD_SV2"/>
    <property type="match status" value="1"/>
</dbReference>
<dbReference type="Pfam" id="PF07690">
    <property type="entry name" value="MFS_1"/>
    <property type="match status" value="1"/>
</dbReference>
<dbReference type="Pfam" id="PF00083">
    <property type="entry name" value="Sugar_tr"/>
    <property type="match status" value="1"/>
</dbReference>
<dbReference type="SUPFAM" id="SSF103473">
    <property type="entry name" value="MFS general substrate transporter"/>
    <property type="match status" value="2"/>
</dbReference>
<dbReference type="SUPFAM" id="SSF141571">
    <property type="entry name" value="Pentapeptide repeat-like"/>
    <property type="match status" value="1"/>
</dbReference>
<dbReference type="PROSITE" id="PS50850">
    <property type="entry name" value="MFS"/>
    <property type="match status" value="1"/>
</dbReference>
<proteinExistence type="evidence at protein level"/>
<gene>
    <name type="primary">Sv2b</name>
    <name type="synonym">Kiaa0735</name>
</gene>
<reference key="1">
    <citation type="journal article" date="2005" name="Science">
        <title>The transcriptional landscape of the mammalian genome.</title>
        <authorList>
            <person name="Carninci P."/>
            <person name="Kasukawa T."/>
            <person name="Katayama S."/>
            <person name="Gough J."/>
            <person name="Frith M.C."/>
            <person name="Maeda N."/>
            <person name="Oyama R."/>
            <person name="Ravasi T."/>
            <person name="Lenhard B."/>
            <person name="Wells C."/>
            <person name="Kodzius R."/>
            <person name="Shimokawa K."/>
            <person name="Bajic V.B."/>
            <person name="Brenner S.E."/>
            <person name="Batalov S."/>
            <person name="Forrest A.R."/>
            <person name="Zavolan M."/>
            <person name="Davis M.J."/>
            <person name="Wilming L.G."/>
            <person name="Aidinis V."/>
            <person name="Allen J.E."/>
            <person name="Ambesi-Impiombato A."/>
            <person name="Apweiler R."/>
            <person name="Aturaliya R.N."/>
            <person name="Bailey T.L."/>
            <person name="Bansal M."/>
            <person name="Baxter L."/>
            <person name="Beisel K.W."/>
            <person name="Bersano T."/>
            <person name="Bono H."/>
            <person name="Chalk A.M."/>
            <person name="Chiu K.P."/>
            <person name="Choudhary V."/>
            <person name="Christoffels A."/>
            <person name="Clutterbuck D.R."/>
            <person name="Crowe M.L."/>
            <person name="Dalla E."/>
            <person name="Dalrymple B.P."/>
            <person name="de Bono B."/>
            <person name="Della Gatta G."/>
            <person name="di Bernardo D."/>
            <person name="Down T."/>
            <person name="Engstrom P."/>
            <person name="Fagiolini M."/>
            <person name="Faulkner G."/>
            <person name="Fletcher C.F."/>
            <person name="Fukushima T."/>
            <person name="Furuno M."/>
            <person name="Futaki S."/>
            <person name="Gariboldi M."/>
            <person name="Georgii-Hemming P."/>
            <person name="Gingeras T.R."/>
            <person name="Gojobori T."/>
            <person name="Green R.E."/>
            <person name="Gustincich S."/>
            <person name="Harbers M."/>
            <person name="Hayashi Y."/>
            <person name="Hensch T.K."/>
            <person name="Hirokawa N."/>
            <person name="Hill D."/>
            <person name="Huminiecki L."/>
            <person name="Iacono M."/>
            <person name="Ikeo K."/>
            <person name="Iwama A."/>
            <person name="Ishikawa T."/>
            <person name="Jakt M."/>
            <person name="Kanapin A."/>
            <person name="Katoh M."/>
            <person name="Kawasawa Y."/>
            <person name="Kelso J."/>
            <person name="Kitamura H."/>
            <person name="Kitano H."/>
            <person name="Kollias G."/>
            <person name="Krishnan S.P."/>
            <person name="Kruger A."/>
            <person name="Kummerfeld S.K."/>
            <person name="Kurochkin I.V."/>
            <person name="Lareau L.F."/>
            <person name="Lazarevic D."/>
            <person name="Lipovich L."/>
            <person name="Liu J."/>
            <person name="Liuni S."/>
            <person name="McWilliam S."/>
            <person name="Madan Babu M."/>
            <person name="Madera M."/>
            <person name="Marchionni L."/>
            <person name="Matsuda H."/>
            <person name="Matsuzawa S."/>
            <person name="Miki H."/>
            <person name="Mignone F."/>
            <person name="Miyake S."/>
            <person name="Morris K."/>
            <person name="Mottagui-Tabar S."/>
            <person name="Mulder N."/>
            <person name="Nakano N."/>
            <person name="Nakauchi H."/>
            <person name="Ng P."/>
            <person name="Nilsson R."/>
            <person name="Nishiguchi S."/>
            <person name="Nishikawa S."/>
            <person name="Nori F."/>
            <person name="Ohara O."/>
            <person name="Okazaki Y."/>
            <person name="Orlando V."/>
            <person name="Pang K.C."/>
            <person name="Pavan W.J."/>
            <person name="Pavesi G."/>
            <person name="Pesole G."/>
            <person name="Petrovsky N."/>
            <person name="Piazza S."/>
            <person name="Reed J."/>
            <person name="Reid J.F."/>
            <person name="Ring B.Z."/>
            <person name="Ringwald M."/>
            <person name="Rost B."/>
            <person name="Ruan Y."/>
            <person name="Salzberg S.L."/>
            <person name="Sandelin A."/>
            <person name="Schneider C."/>
            <person name="Schoenbach C."/>
            <person name="Sekiguchi K."/>
            <person name="Semple C.A."/>
            <person name="Seno S."/>
            <person name="Sessa L."/>
            <person name="Sheng Y."/>
            <person name="Shibata Y."/>
            <person name="Shimada H."/>
            <person name="Shimada K."/>
            <person name="Silva D."/>
            <person name="Sinclair B."/>
            <person name="Sperling S."/>
            <person name="Stupka E."/>
            <person name="Sugiura K."/>
            <person name="Sultana R."/>
            <person name="Takenaka Y."/>
            <person name="Taki K."/>
            <person name="Tammoja K."/>
            <person name="Tan S.L."/>
            <person name="Tang S."/>
            <person name="Taylor M.S."/>
            <person name="Tegner J."/>
            <person name="Teichmann S.A."/>
            <person name="Ueda H.R."/>
            <person name="van Nimwegen E."/>
            <person name="Verardo R."/>
            <person name="Wei C.L."/>
            <person name="Yagi K."/>
            <person name="Yamanishi H."/>
            <person name="Zabarovsky E."/>
            <person name="Zhu S."/>
            <person name="Zimmer A."/>
            <person name="Hide W."/>
            <person name="Bult C."/>
            <person name="Grimmond S.M."/>
            <person name="Teasdale R.D."/>
            <person name="Liu E.T."/>
            <person name="Brusic V."/>
            <person name="Quackenbush J."/>
            <person name="Wahlestedt C."/>
            <person name="Mattick J.S."/>
            <person name="Hume D.A."/>
            <person name="Kai C."/>
            <person name="Sasaki D."/>
            <person name="Tomaru Y."/>
            <person name="Fukuda S."/>
            <person name="Kanamori-Katayama M."/>
            <person name="Suzuki M."/>
            <person name="Aoki J."/>
            <person name="Arakawa T."/>
            <person name="Iida J."/>
            <person name="Imamura K."/>
            <person name="Itoh M."/>
            <person name="Kato T."/>
            <person name="Kawaji H."/>
            <person name="Kawagashira N."/>
            <person name="Kawashima T."/>
            <person name="Kojima M."/>
            <person name="Kondo S."/>
            <person name="Konno H."/>
            <person name="Nakano K."/>
            <person name="Ninomiya N."/>
            <person name="Nishio T."/>
            <person name="Okada M."/>
            <person name="Plessy C."/>
            <person name="Shibata K."/>
            <person name="Shiraki T."/>
            <person name="Suzuki S."/>
            <person name="Tagami M."/>
            <person name="Waki K."/>
            <person name="Watahiki A."/>
            <person name="Okamura-Oho Y."/>
            <person name="Suzuki H."/>
            <person name="Kawai J."/>
            <person name="Hayashizaki Y."/>
        </authorList>
    </citation>
    <scope>NUCLEOTIDE SEQUENCE [LARGE SCALE MRNA]</scope>
    <source>
        <strain>C57BL/6J</strain>
        <tissue>Brain cortex</tissue>
        <tissue>Corpora quadrigemina</tissue>
        <tissue>Testis</tissue>
    </source>
</reference>
<reference key="2">
    <citation type="journal article" date="2004" name="Genome Res.">
        <title>The status, quality, and expansion of the NIH full-length cDNA project: the Mammalian Gene Collection (MGC).</title>
        <authorList>
            <consortium name="The MGC Project Team"/>
        </authorList>
    </citation>
    <scope>NUCLEOTIDE SEQUENCE [LARGE SCALE MRNA]</scope>
    <source>
        <strain>C57BL/6J</strain>
        <tissue>Brain</tissue>
    </source>
</reference>
<reference key="3">
    <citation type="journal article" date="1999" name="Neuron">
        <title>SV2A and SV2B function as redundant Ca2+ regulators in neurotransmitter release.</title>
        <authorList>
            <person name="Janz R."/>
            <person name="Goda Y."/>
            <person name="Geppert M."/>
            <person name="Missler M."/>
            <person name="Suedhof T.C."/>
        </authorList>
    </citation>
    <scope>NUCLEOTIDE SEQUENCE [GENOMIC DNA] OF 1-150</scope>
    <scope>FUNCTION</scope>
    <scope>DISRUPTION PHENOTYPE</scope>
    <source>
        <strain>129/Sv</strain>
    </source>
</reference>
<reference key="4">
    <citation type="journal article" date="2003" name="DNA Res.">
        <title>Prediction of the coding sequences of mouse homologues of KIAA gene: II. The complete nucleotide sequences of 400 mouse KIAA-homologous cDNAs identified by screening of terminal sequences of cDNA clones randomly sampled from size-fractionated libraries.</title>
        <authorList>
            <person name="Okazaki N."/>
            <person name="Kikuno R."/>
            <person name="Ohara R."/>
            <person name="Inamoto S."/>
            <person name="Aizawa H."/>
            <person name="Yuasa S."/>
            <person name="Nakajima D."/>
            <person name="Nagase T."/>
            <person name="Ohara O."/>
            <person name="Koga H."/>
        </authorList>
    </citation>
    <scope>NUCLEOTIDE SEQUENCE [LARGE SCALE MRNA] OF 96-683</scope>
</reference>
<reference key="5">
    <citation type="journal article" date="1999" name="Proc. Natl. Acad. Sci. U.S.A.">
        <title>Abnormal neurotransmission in mice lacking synaptic vesicle protein 2A (SV2A).</title>
        <authorList>
            <person name="Crowder K.M."/>
            <person name="Gunther J.M."/>
            <person name="Jones T.A."/>
            <person name="Hale B.D."/>
            <person name="Zhang H.Z."/>
            <person name="Peterson M.R."/>
            <person name="Scheller R.H."/>
            <person name="Chavkin C."/>
            <person name="Bajjalieh S.M."/>
        </authorList>
    </citation>
    <scope>INDUCTION</scope>
    <scope>DISRUPTION PHENOTYPE</scope>
</reference>
<reference key="6">
    <citation type="journal article" date="2003" name="J. Comp. Neurol.">
        <title>Differential distribution and developmental expression of synaptic vesicle protein 2 isoforms in the mouse retina.</title>
        <authorList>
            <person name="Wang M.M."/>
            <person name="Janz R."/>
            <person name="Belizaire R."/>
            <person name="Frishman L.J."/>
            <person name="Sherry D.M."/>
        </authorList>
    </citation>
    <scope>TISSUE SPECIFICITY</scope>
    <scope>DEVELOPMENTAL STAGE</scope>
</reference>
<reference key="7">
    <citation type="journal article" date="2004" name="J. Biol. Chem.">
        <title>SV2B regulates synaptotagmin 1 by direct interaction.</title>
        <authorList>
            <person name="Lazzell D.R."/>
            <person name="Belizaire R."/>
            <person name="Thakur P."/>
            <person name="Sherry D.M."/>
            <person name="Janz R."/>
        </authorList>
    </citation>
    <scope>INTERACTION WITH SYT1; SYNTAXIN-1 AND SNAP25</scope>
</reference>
<reference key="8">
    <citation type="journal article" date="2006" name="Science">
        <title>SV2 is the protein receptor for botulinum neurotoxin A.</title>
        <authorList>
            <person name="Dong M."/>
            <person name="Yeh F."/>
            <person name="Tepp W.H."/>
            <person name="Dean C."/>
            <person name="Johnson E.A."/>
            <person name="Janz R."/>
            <person name="Chapman E.R."/>
        </authorList>
    </citation>
    <scope>FUNCTION AS C.BOTULINUM NEUROTOXIN TYPE A RECEPTOR (MICROBIAL INFECTION)</scope>
    <scope>SUBUNIT (MICROBIAL INFECTION)</scope>
    <scope>TISSUE SPECIFICITY</scope>
    <scope>DISRUPTION PHENOTYPE</scope>
</reference>
<reference key="9">
    <citation type="journal article" date="2008" name="J. Proteome Res.">
        <title>Large-scale identification and evolution indexing of tyrosine phosphorylation sites from murine brain.</title>
        <authorList>
            <person name="Ballif B.A."/>
            <person name="Carey G.R."/>
            <person name="Sunyaev S.R."/>
            <person name="Gygi S.P."/>
        </authorList>
    </citation>
    <scope>PHOSPHORYLATION [LARGE SCALE ANALYSIS] AT TYR-423</scope>
    <scope>IDENTIFICATION BY MASS SPECTROMETRY [LARGE SCALE ANALYSIS]</scope>
    <source>
        <tissue>Brain</tissue>
    </source>
</reference>
<reference key="10">
    <citation type="journal article" date="2008" name="Mol. Biol. Cell">
        <title>Glycosylated SV2A and SV2B mediate the entry of botulinum neurotoxin E into neurons.</title>
        <authorList>
            <person name="Dong M."/>
            <person name="Liu H."/>
            <person name="Tepp W.H."/>
            <person name="Johnson E.A."/>
            <person name="Janz R."/>
            <person name="Chapman E.R."/>
        </authorList>
    </citation>
    <scope>FUNCTION AS C.BOTULINUM NEUROTOXIN TYPE E RECEPTOR (MICROBIAL INFECTION)</scope>
    <scope>TISSUE SPECIFICITY</scope>
    <scope>DISRUPTION PHENOTYPE</scope>
</reference>
<reference key="11">
    <citation type="journal article" date="2010" name="Cell">
        <title>A tissue-specific atlas of mouse protein phosphorylation and expression.</title>
        <authorList>
            <person name="Huttlin E.L."/>
            <person name="Jedrychowski M.P."/>
            <person name="Elias J.E."/>
            <person name="Goswami T."/>
            <person name="Rad R."/>
            <person name="Beausoleil S.A."/>
            <person name="Villen J."/>
            <person name="Haas W."/>
            <person name="Sowa M.E."/>
            <person name="Gygi S.P."/>
        </authorList>
    </citation>
    <scope>PHOSPHORYLATION [LARGE SCALE ANALYSIS] AT SER-33 AND THR-36</scope>
    <scope>IDENTIFICATION BY MASS SPECTROMETRY [LARGE SCALE ANALYSIS]</scope>
    <source>
        <tissue>Brain</tissue>
    </source>
</reference>
<reference key="12">
    <citation type="journal article" date="2011" name="PLoS Pathog.">
        <title>Botulinum neurotoxin D uses synaptic vesicle protein SV2 and gangliosides as receptors.</title>
        <authorList>
            <person name="Peng L."/>
            <person name="Tepp W.H."/>
            <person name="Johnson E.A."/>
            <person name="Dong M."/>
        </authorList>
    </citation>
    <scope>POSSIBLE FUNCTION AS C.BOTULINUM NEUROTOXIN TYPE D RECEPTOR (MICROBIAL INFECTION)</scope>
    <scope>DISRUPTION PHENOTYPE</scope>
</reference>
<reference key="13">
    <citation type="journal article" date="2011" name="J. Biol. Chem.">
        <title>Novel ganglioside-mediated entry of botulinum neurotoxin serotype D into neurons.</title>
        <authorList>
            <person name="Kroken A.R."/>
            <person name="Karalewitz A.P."/>
            <person name="Fu Z."/>
            <person name="Kim J.J."/>
            <person name="Barbieri J.T."/>
        </authorList>
    </citation>
    <scope>NOT RECEPTOR FOR C.BOTULINUM NEUROTOXIN TYPE D (MICROBIAL INFECTION)</scope>
</reference>
<name>SV2B_MOUSE</name>
<protein>
    <recommendedName>
        <fullName>Synaptic vesicle glycoprotein 2B</fullName>
        <shortName>Synaptic vesicle protein 2B</shortName>
    </recommendedName>
</protein>
<sequence length="683" mass="77457">MDDYRYRDNYEGYAPSDGYYRSNEQNQEEDAQSDVTEGHDEEDEIYEGEYQGIPHPDDVKSKQTKMAPSRADGLGGQADLMAERMEDEEELAHQYETIIDECGHGRFQWTLFFVLGLALMADGVEIFVVSFALPSAEKDMCLSSSKKGMLGLIVYLGMMAGAFILGGLADKLGRKKVLSMSLAINASFASLSSFVQGYGAFLFCRLISGIGIGGSLPIVFAYFSEFLSREKRGEHLSWLGIFWMTGGIYASAMAWSIIPHYGWGFSMGTNYHFHSWRVFVIVCALPATVSMVALKFMPESPRFLLEMGKHDEAWMILKQVHDTNMRAKGTPEKVFTVSHIKTPKQMDEFIEIQSSTGTWYQRWLVRFMTIFKQVWDNALYCVMGPYRMNTLILAVVWFTMALSYYGLTVWFPDMIRYFQDEEYKSKMKVFFGEHVHGATINFTMENQIHQHGKLVNDKFIKMYFKHVLFEDTFFDKCYFEDVTSTDTYFKNCTIESTTFYNTDLYKHKFINCRFINSTFLEQKEGCHMDFEEDNDFLIYLVSFLGSLSVLPGNIISALLMDRIGRLKMIGGSMLISAVCCFFLFFGNSESAMIGWQCLFCGTSIAAWNALDVITVELYPTNQRATAFGILNGLCKFGAILGNTIFASFVGITKVVPILLAAASLVGGGLIALRLPETREQVLM</sequence>
<organism>
    <name type="scientific">Mus musculus</name>
    <name type="common">Mouse</name>
    <dbReference type="NCBI Taxonomy" id="10090"/>
    <lineage>
        <taxon>Eukaryota</taxon>
        <taxon>Metazoa</taxon>
        <taxon>Chordata</taxon>
        <taxon>Craniata</taxon>
        <taxon>Vertebrata</taxon>
        <taxon>Euteleostomi</taxon>
        <taxon>Mammalia</taxon>
        <taxon>Eutheria</taxon>
        <taxon>Euarchontoglires</taxon>
        <taxon>Glires</taxon>
        <taxon>Rodentia</taxon>
        <taxon>Myomorpha</taxon>
        <taxon>Muroidea</taxon>
        <taxon>Muridae</taxon>
        <taxon>Murinae</taxon>
        <taxon>Mus</taxon>
        <taxon>Mus</taxon>
    </lineage>
</organism>
<comment type="function">
    <text evidence="14">Probably plays a role in the control of regulated secretion in neural and endocrine cells.</text>
</comment>
<comment type="function">
    <text evidence="9">(Microbial infection) Receptor for C.botulinum neurotoxin type A (BoNT/A, botA); the toxin probably binds via extracellular loop 4 (PubMed:16543415).</text>
</comment>
<comment type="function">
    <text evidence="12">(Microbial infection) Possible receptor for C.botulinum neurotoxin type D (BoNT/D, botD) (PubMed:21483489). Not a receptor for C.botulinum neurotoxin type D (BoNT/D, botD) (PubMed:21632541).</text>
</comment>
<comment type="function">
    <text evidence="10 16">(Microbial infection) Receptor for C.botulinum neurotoxin type E (BoNT/E); the toxin probably binds via extracellular loop 4 (PubMed:18815274). It probably requires glycosylation of Asn-516 (PubMed:18815274).</text>
</comment>
<comment type="subunit">
    <text evidence="8">Interacts with SYT1 in a calcium-independent manner. Forms a complex with SYT1, syntaxin-1 and SNAP25.</text>
</comment>
<comment type="subunit">
    <text evidence="10 15">(Microbial infection) Interacts with C.botulinum neurotoxin type A (BoNT/A, botA).</text>
</comment>
<comment type="subunit">
    <text evidence="11 12">(Microbial infection) Interacts with C.botulinum neurotoxin type D (BoNT/D, botD) (PubMed:21483489). No evidence for its interaction with BoNT/D has also been published (PubMed:21632541).</text>
</comment>
<comment type="subcellular location">
    <subcellularLocation>
        <location evidence="2">Cytoplasmic vesicle</location>
        <location evidence="2">Secretory vesicle</location>
        <location evidence="2">Synaptic vesicle membrane</location>
        <topology evidence="3">Multi-pass membrane protein</topology>
    </subcellularLocation>
    <subcellularLocation>
        <location evidence="2">Cytoplasmic vesicle</location>
        <location evidence="2">Secretory vesicle</location>
        <location evidence="2">Acrosome</location>
    </subcellularLocation>
    <text evidence="2">Associated with synaptic-like microvesicles but not with insulin-containing vesicles in insulin-secreting cells of the pancreas (By similarity). Localizes to microvesicles in the pinealocytes. Localizes to the acrosome in spermatids (By similarity).</text>
</comment>
<comment type="tissue specificity">
    <text evidence="7 9 10">Expressed in ribbon synapses of the retina (at protein level) (PubMed:12687700). Expressed in diaphragm motor nerve terminals (at protein level) (PubMed:16543415). Expressed in hippocampus neurons (at protein level) (PubMed:18815274).</text>
</comment>
<comment type="developmental stage">
    <text evidence="7">Expressed during synaptogenesis in the retina (at protein level).</text>
</comment>
<comment type="induction">
    <text evidence="5">Up-regulated upon Sv2a depletion.</text>
</comment>
<comment type="PTM">
    <text evidence="16">N-glycosylated.</text>
</comment>
<comment type="PTM">
    <text evidence="1">The N-terminal cytoplasmic domain is phosphorylated by CK1.</text>
</comment>
<comment type="disruption phenotype">
    <text evidence="5 6 9 10 11">Mice display no particular phenotype (PubMed:10624962). Single knockout mice survive significantly longer than wild-type mice upon exposure to C.botulinum neurotoxin type A (BoNT/A, botA) (PubMed:16543415). Mice lacking both Sv2a and Sv2b experience severe epileptic seizures and die immediately or shortly after birth similarly to mice lacking only Sv2a (PubMed:10624962). Single knockout mice bind reduced amounts of BoNT/A than wild-type mice (PubMed:16543415). Single knockout mice are significantly more resistant to C.botulinum neurotoxin type E (BoNT/E) than wild-type mice (PubMed:18815274). In single knockout mice, synaptobrevin (VAMP, the target of C.botulinum neurotoxin type D, BoNT/D) is degraded by BoNT/D, and hippocampal neurons bind BoNT/D (PubMed:21483489). Hippocampal neurons from young mice lacking both Sv2a and Sv2b do not bind BoNT/A, nor do they take it up (PubMed:16543415, PubMed:18815274). Hippocampal neurons from young mice lacking both Sv2a and Sv2b do not bind C.botulinum neurotoxin type E (BoNT/E), nor do they take it up (PubMed:18815274). Hippocampal neurons from young mice lacking both Sv2a and Sv2b do not bind C.botulinum neurotoxin type D (BoNT/D, botD), nor do they take it up (PubMed:21483489). Hippocampal neurons from young mice lacking both Sv2a and Sv2b take up C.botulinum neurotoxin type C (BoNT/C) and C.botulinum neurotoxin type F (BonT/F, botF) normally (PubMed:21483489).</text>
</comment>
<comment type="similarity">
    <text evidence="13">Belongs to the major facilitator superfamily.</text>
</comment>
<comment type="caution">
    <text evidence="11 12">The use of this protein as a coreceptor for C.botulinum type D (BoNT/D, botD) is controversial. In double SV2A/SV2B knockout mice BoNT/D does not degrade its synaptobrevin target; introducing SV2A, SV2B or SV2C restores target cleavage (PubMed:21483489). However another group does not find a convincing interaction with SV2 (PubMed:21632541).</text>
</comment>
<accession>Q8BG39</accession>
<accession>Q80TT1</accession>
<accession>Q9ES95</accession>
<keyword id="KW-0968">Cytoplasmic vesicle</keyword>
<keyword id="KW-0325">Glycoprotein</keyword>
<keyword id="KW-0472">Membrane</keyword>
<keyword id="KW-0532">Neurotransmitter transport</keyword>
<keyword id="KW-0597">Phosphoprotein</keyword>
<keyword id="KW-0675">Receptor</keyword>
<keyword id="KW-1185">Reference proteome</keyword>
<keyword id="KW-0770">Synapse</keyword>
<keyword id="KW-0812">Transmembrane</keyword>
<keyword id="KW-1133">Transmembrane helix</keyword>
<keyword id="KW-0813">Transport</keyword>
<feature type="chain" id="PRO_0000239769" description="Synaptic vesicle glycoprotein 2B">
    <location>
        <begin position="1"/>
        <end position="683"/>
    </location>
</feature>
<feature type="topological domain" description="Cytoplasmic" evidence="3">
    <location>
        <begin position="1"/>
        <end position="110"/>
    </location>
</feature>
<feature type="transmembrane region" description="Helical" evidence="3">
    <location>
        <begin position="111"/>
        <end position="131"/>
    </location>
</feature>
<feature type="topological domain" description="Extracellular" evidence="3">
    <location>
        <begin position="132"/>
        <end position="148"/>
    </location>
</feature>
<feature type="transmembrane region" description="Helical" evidence="3">
    <location>
        <begin position="149"/>
        <end position="169"/>
    </location>
</feature>
<feature type="topological domain" description="Cytoplasmic" evidence="3">
    <location>
        <begin position="170"/>
        <end position="182"/>
    </location>
</feature>
<feature type="transmembrane region" description="Helical" evidence="3">
    <location>
        <begin position="183"/>
        <end position="203"/>
    </location>
</feature>
<feature type="topological domain" description="Extracellular" evidence="3">
    <location>
        <begin position="204"/>
        <end position="205"/>
    </location>
</feature>
<feature type="transmembrane region" description="Helical" evidence="3">
    <location>
        <begin position="206"/>
        <end position="226"/>
    </location>
</feature>
<feature type="topological domain" description="Cytoplasmic" evidence="3">
    <location>
        <begin position="227"/>
        <end position="237"/>
    </location>
</feature>
<feature type="transmembrane region" description="Helical" evidence="3">
    <location>
        <begin position="238"/>
        <end position="258"/>
    </location>
</feature>
<feature type="topological domain" description="Extracellular" evidence="3">
    <location>
        <begin position="259"/>
        <end position="277"/>
    </location>
</feature>
<feature type="transmembrane region" description="Helical" evidence="3">
    <location>
        <begin position="278"/>
        <end position="298"/>
    </location>
</feature>
<feature type="topological domain" description="Cytoplasmic" evidence="3">
    <location>
        <begin position="299"/>
        <end position="390"/>
    </location>
</feature>
<feature type="transmembrane region" description="Helical" evidence="3">
    <location>
        <begin position="391"/>
        <end position="411"/>
    </location>
</feature>
<feature type="topological domain" description="Extracellular" evidence="3">
    <location>
        <begin position="412"/>
        <end position="535"/>
    </location>
</feature>
<feature type="transmembrane region" description="Helical" evidence="3">
    <location>
        <begin position="536"/>
        <end position="556"/>
    </location>
</feature>
<feature type="topological domain" description="Cytoplasmic" evidence="3">
    <location>
        <begin position="557"/>
        <end position="565"/>
    </location>
</feature>
<feature type="transmembrane region" description="Helical" evidence="3">
    <location>
        <begin position="566"/>
        <end position="586"/>
    </location>
</feature>
<feature type="topological domain" description="Extracellular" evidence="3">
    <location>
        <begin position="587"/>
        <end position="592"/>
    </location>
</feature>
<feature type="transmembrane region" description="Helical" evidence="3">
    <location>
        <begin position="593"/>
        <end position="613"/>
    </location>
</feature>
<feature type="topological domain" description="Cytoplasmic" evidence="3">
    <location>
        <begin position="614"/>
        <end position="626"/>
    </location>
</feature>
<feature type="transmembrane region" description="Helical" evidence="3">
    <location>
        <begin position="627"/>
        <end position="649"/>
    </location>
</feature>
<feature type="topological domain" description="Extracellular" evidence="3">
    <location>
        <begin position="650"/>
        <end position="653"/>
    </location>
</feature>
<feature type="transmembrane region" description="Helical" evidence="3">
    <location>
        <begin position="654"/>
        <end position="672"/>
    </location>
</feature>
<feature type="topological domain" description="Cytoplasmic" evidence="3">
    <location>
        <begin position="673"/>
        <end position="683"/>
    </location>
</feature>
<feature type="region of interest" description="Disordered" evidence="4">
    <location>
        <begin position="1"/>
        <end position="73"/>
    </location>
</feature>
<feature type="compositionally biased region" description="Basic and acidic residues" evidence="4">
    <location>
        <begin position="1"/>
        <end position="10"/>
    </location>
</feature>
<feature type="modified residue" description="Phosphoserine" evidence="18">
    <location>
        <position position="33"/>
    </location>
</feature>
<feature type="modified residue" description="Phosphothreonine" evidence="18">
    <location>
        <position position="36"/>
    </location>
</feature>
<feature type="modified residue" description="Phosphotyrosine" evidence="17">
    <location>
        <position position="423"/>
    </location>
</feature>
<feature type="glycosylation site" description="N-linked (GlcNAc...) asparagine" evidence="3">
    <location>
        <position position="441"/>
    </location>
</feature>
<feature type="glycosylation site" description="N-linked (GlcNAc...) asparagine" evidence="3">
    <location>
        <position position="491"/>
    </location>
</feature>
<feature type="glycosylation site" description="N-linked (GlcNAc...) asparagine" evidence="3">
    <location>
        <position position="516"/>
    </location>
</feature>
<feature type="sequence conflict" description="In Ref. 3; AAG28491." evidence="13" ref="3">
    <original>G</original>
    <variation>D</variation>
    <location>
        <position position="18"/>
    </location>
</feature>